<protein>
    <recommendedName>
        <fullName>UPF0057 membrane protein At4g30660</fullName>
    </recommendedName>
</protein>
<gene>
    <name type="ordered locus">At4g30660</name>
    <name type="ORF">T10C21.10</name>
</gene>
<feature type="chain" id="PRO_0000193977" description="UPF0057 membrane protein At4g30660">
    <location>
        <begin position="1"/>
        <end position="74"/>
    </location>
</feature>
<feature type="transmembrane region" description="Helical" evidence="1">
    <location>
        <begin position="4"/>
        <end position="24"/>
    </location>
</feature>
<feature type="transmembrane region" description="Helical" evidence="1">
    <location>
        <begin position="37"/>
        <end position="57"/>
    </location>
</feature>
<reference key="1">
    <citation type="journal article" date="1999" name="Nature">
        <title>Sequence and analysis of chromosome 4 of the plant Arabidopsis thaliana.</title>
        <authorList>
            <person name="Mayer K.F.X."/>
            <person name="Schueller C."/>
            <person name="Wambutt R."/>
            <person name="Murphy G."/>
            <person name="Volckaert G."/>
            <person name="Pohl T."/>
            <person name="Duesterhoeft A."/>
            <person name="Stiekema W."/>
            <person name="Entian K.-D."/>
            <person name="Terryn N."/>
            <person name="Harris B."/>
            <person name="Ansorge W."/>
            <person name="Brandt P."/>
            <person name="Grivell L.A."/>
            <person name="Rieger M."/>
            <person name="Weichselgartner M."/>
            <person name="de Simone V."/>
            <person name="Obermaier B."/>
            <person name="Mache R."/>
            <person name="Mueller M."/>
            <person name="Kreis M."/>
            <person name="Delseny M."/>
            <person name="Puigdomenech P."/>
            <person name="Watson M."/>
            <person name="Schmidtheini T."/>
            <person name="Reichert B."/>
            <person name="Portetelle D."/>
            <person name="Perez-Alonso M."/>
            <person name="Boutry M."/>
            <person name="Bancroft I."/>
            <person name="Vos P."/>
            <person name="Hoheisel J."/>
            <person name="Zimmermann W."/>
            <person name="Wedler H."/>
            <person name="Ridley P."/>
            <person name="Langham S.-A."/>
            <person name="McCullagh B."/>
            <person name="Bilham L."/>
            <person name="Robben J."/>
            <person name="van der Schueren J."/>
            <person name="Grymonprez B."/>
            <person name="Chuang Y.-J."/>
            <person name="Vandenbussche F."/>
            <person name="Braeken M."/>
            <person name="Weltjens I."/>
            <person name="Voet M."/>
            <person name="Bastiaens I."/>
            <person name="Aert R."/>
            <person name="Defoor E."/>
            <person name="Weitzenegger T."/>
            <person name="Bothe G."/>
            <person name="Ramsperger U."/>
            <person name="Hilbert H."/>
            <person name="Braun M."/>
            <person name="Holzer E."/>
            <person name="Brandt A."/>
            <person name="Peters S."/>
            <person name="van Staveren M."/>
            <person name="Dirkse W."/>
            <person name="Mooijman P."/>
            <person name="Klein Lankhorst R."/>
            <person name="Rose M."/>
            <person name="Hauf J."/>
            <person name="Koetter P."/>
            <person name="Berneiser S."/>
            <person name="Hempel S."/>
            <person name="Feldpausch M."/>
            <person name="Lamberth S."/>
            <person name="Van den Daele H."/>
            <person name="De Keyser A."/>
            <person name="Buysshaert C."/>
            <person name="Gielen J."/>
            <person name="Villarroel R."/>
            <person name="De Clercq R."/>
            <person name="van Montagu M."/>
            <person name="Rogers J."/>
            <person name="Cronin A."/>
            <person name="Quail M.A."/>
            <person name="Bray-Allen S."/>
            <person name="Clark L."/>
            <person name="Doggett J."/>
            <person name="Hall S."/>
            <person name="Kay M."/>
            <person name="Lennard N."/>
            <person name="McLay K."/>
            <person name="Mayes R."/>
            <person name="Pettett A."/>
            <person name="Rajandream M.A."/>
            <person name="Lyne M."/>
            <person name="Benes V."/>
            <person name="Rechmann S."/>
            <person name="Borkova D."/>
            <person name="Bloecker H."/>
            <person name="Scharfe M."/>
            <person name="Grimm M."/>
            <person name="Loehnert T.-H."/>
            <person name="Dose S."/>
            <person name="de Haan M."/>
            <person name="Maarse A.C."/>
            <person name="Schaefer M."/>
            <person name="Mueller-Auer S."/>
            <person name="Gabel C."/>
            <person name="Fuchs M."/>
            <person name="Fartmann B."/>
            <person name="Granderath K."/>
            <person name="Dauner D."/>
            <person name="Herzl A."/>
            <person name="Neumann S."/>
            <person name="Argiriou A."/>
            <person name="Vitale D."/>
            <person name="Liguori R."/>
            <person name="Piravandi E."/>
            <person name="Massenet O."/>
            <person name="Quigley F."/>
            <person name="Clabauld G."/>
            <person name="Muendlein A."/>
            <person name="Felber R."/>
            <person name="Schnabl S."/>
            <person name="Hiller R."/>
            <person name="Schmidt W."/>
            <person name="Lecharny A."/>
            <person name="Aubourg S."/>
            <person name="Chefdor F."/>
            <person name="Cooke R."/>
            <person name="Berger C."/>
            <person name="Monfort A."/>
            <person name="Casacuberta E."/>
            <person name="Gibbons T."/>
            <person name="Weber N."/>
            <person name="Vandenbol M."/>
            <person name="Bargues M."/>
            <person name="Terol J."/>
            <person name="Torres A."/>
            <person name="Perez-Perez A."/>
            <person name="Purnelle B."/>
            <person name="Bent E."/>
            <person name="Johnson S."/>
            <person name="Tacon D."/>
            <person name="Jesse T."/>
            <person name="Heijnen L."/>
            <person name="Schwarz S."/>
            <person name="Scholler P."/>
            <person name="Heber S."/>
            <person name="Francs P."/>
            <person name="Bielke C."/>
            <person name="Frishman D."/>
            <person name="Haase D."/>
            <person name="Lemcke K."/>
            <person name="Mewes H.-W."/>
            <person name="Stocker S."/>
            <person name="Zaccaria P."/>
            <person name="Bevan M."/>
            <person name="Wilson R.K."/>
            <person name="de la Bastide M."/>
            <person name="Habermann K."/>
            <person name="Parnell L."/>
            <person name="Dedhia N."/>
            <person name="Gnoj L."/>
            <person name="Schutz K."/>
            <person name="Huang E."/>
            <person name="Spiegel L."/>
            <person name="Sekhon M."/>
            <person name="Murray J."/>
            <person name="Sheet P."/>
            <person name="Cordes M."/>
            <person name="Abu-Threideh J."/>
            <person name="Stoneking T."/>
            <person name="Kalicki J."/>
            <person name="Graves T."/>
            <person name="Harmon G."/>
            <person name="Edwards J."/>
            <person name="Latreille P."/>
            <person name="Courtney L."/>
            <person name="Cloud J."/>
            <person name="Abbott A."/>
            <person name="Scott K."/>
            <person name="Johnson D."/>
            <person name="Minx P."/>
            <person name="Bentley D."/>
            <person name="Fulton B."/>
            <person name="Miller N."/>
            <person name="Greco T."/>
            <person name="Kemp K."/>
            <person name="Kramer J."/>
            <person name="Fulton L."/>
            <person name="Mardis E."/>
            <person name="Dante M."/>
            <person name="Pepin K."/>
            <person name="Hillier L.W."/>
            <person name="Nelson J."/>
            <person name="Spieth J."/>
            <person name="Ryan E."/>
            <person name="Andrews S."/>
            <person name="Geisel C."/>
            <person name="Layman D."/>
            <person name="Du H."/>
            <person name="Ali J."/>
            <person name="Berghoff A."/>
            <person name="Jones K."/>
            <person name="Drone K."/>
            <person name="Cotton M."/>
            <person name="Joshu C."/>
            <person name="Antonoiu B."/>
            <person name="Zidanic M."/>
            <person name="Strong C."/>
            <person name="Sun H."/>
            <person name="Lamar B."/>
            <person name="Yordan C."/>
            <person name="Ma P."/>
            <person name="Zhong J."/>
            <person name="Preston R."/>
            <person name="Vil D."/>
            <person name="Shekher M."/>
            <person name="Matero A."/>
            <person name="Shah R."/>
            <person name="Swaby I.K."/>
            <person name="O'Shaughnessy A."/>
            <person name="Rodriguez M."/>
            <person name="Hoffman J."/>
            <person name="Till S."/>
            <person name="Granat S."/>
            <person name="Shohdy N."/>
            <person name="Hasegawa A."/>
            <person name="Hameed A."/>
            <person name="Lodhi M."/>
            <person name="Johnson A."/>
            <person name="Chen E."/>
            <person name="Marra M.A."/>
            <person name="Martienssen R."/>
            <person name="McCombie W.R."/>
        </authorList>
    </citation>
    <scope>NUCLEOTIDE SEQUENCE [LARGE SCALE GENOMIC DNA]</scope>
    <source>
        <strain>cv. Columbia</strain>
    </source>
</reference>
<reference key="2">
    <citation type="journal article" date="2017" name="Plant J.">
        <title>Araport11: a complete reannotation of the Arabidopsis thaliana reference genome.</title>
        <authorList>
            <person name="Cheng C.Y."/>
            <person name="Krishnakumar V."/>
            <person name="Chan A.P."/>
            <person name="Thibaud-Nissen F."/>
            <person name="Schobel S."/>
            <person name="Town C.D."/>
        </authorList>
    </citation>
    <scope>GENOME REANNOTATION</scope>
    <source>
        <strain>cv. Columbia</strain>
    </source>
</reference>
<reference key="3">
    <citation type="submission" date="2006-12" db="EMBL/GenBank/DDBJ databases">
        <title>Arabidopsis ORF clones.</title>
        <authorList>
            <person name="Bautista V.R."/>
            <person name="Kim C.J."/>
            <person name="Chen H."/>
            <person name="Quinitio C."/>
            <person name="Ecker J.R."/>
        </authorList>
    </citation>
    <scope>NUCLEOTIDE SEQUENCE [LARGE SCALE MRNA]</scope>
    <source>
        <strain>cv. Columbia</strain>
    </source>
</reference>
<sequence>MPSNCEILCEIIIAILLPPLGVCFRKGCCTVEFLICLVLTILGYVPGIIYAIYVIVFQHREEYFDEYRRPIYSA</sequence>
<comment type="subcellular location">
    <subcellularLocation>
        <location evidence="2">Membrane</location>
        <topology evidence="2">Multi-pass membrane protein</topology>
    </subcellularLocation>
</comment>
<comment type="similarity">
    <text evidence="2">Belongs to the UPF0057 (PMP3) family.</text>
</comment>
<keyword id="KW-0472">Membrane</keyword>
<keyword id="KW-1185">Reference proteome</keyword>
<keyword id="KW-0812">Transmembrane</keyword>
<keyword id="KW-1133">Transmembrane helix</keyword>
<accession>Q9SUI0</accession>
<accession>A1A6K9</accession>
<name>RC24_ARATH</name>
<evidence type="ECO:0000255" key="1"/>
<evidence type="ECO:0000305" key="2"/>
<organism>
    <name type="scientific">Arabidopsis thaliana</name>
    <name type="common">Mouse-ear cress</name>
    <dbReference type="NCBI Taxonomy" id="3702"/>
    <lineage>
        <taxon>Eukaryota</taxon>
        <taxon>Viridiplantae</taxon>
        <taxon>Streptophyta</taxon>
        <taxon>Embryophyta</taxon>
        <taxon>Tracheophyta</taxon>
        <taxon>Spermatophyta</taxon>
        <taxon>Magnoliopsida</taxon>
        <taxon>eudicotyledons</taxon>
        <taxon>Gunneridae</taxon>
        <taxon>Pentapetalae</taxon>
        <taxon>rosids</taxon>
        <taxon>malvids</taxon>
        <taxon>Brassicales</taxon>
        <taxon>Brassicaceae</taxon>
        <taxon>Camelineae</taxon>
        <taxon>Arabidopsis</taxon>
    </lineage>
</organism>
<dbReference type="EMBL" id="AL109787">
    <property type="protein sequence ID" value="CAB52439.1"/>
    <property type="molecule type" value="Genomic_DNA"/>
</dbReference>
<dbReference type="EMBL" id="AL161577">
    <property type="protein sequence ID" value="CAB79784.1"/>
    <property type="molecule type" value="Genomic_DNA"/>
</dbReference>
<dbReference type="EMBL" id="CP002687">
    <property type="protein sequence ID" value="AEE85791.1"/>
    <property type="molecule type" value="Genomic_DNA"/>
</dbReference>
<dbReference type="EMBL" id="CP002687">
    <property type="protein sequence ID" value="AEE85792.1"/>
    <property type="molecule type" value="Genomic_DNA"/>
</dbReference>
<dbReference type="EMBL" id="BT029529">
    <property type="protein sequence ID" value="ABL66785.1"/>
    <property type="molecule type" value="mRNA"/>
</dbReference>
<dbReference type="PIR" id="G85358">
    <property type="entry name" value="G85358"/>
</dbReference>
<dbReference type="RefSeq" id="NP_001154278.1">
    <property type="nucleotide sequence ID" value="NM_001160806.1"/>
</dbReference>
<dbReference type="RefSeq" id="NP_194795.1">
    <property type="nucleotide sequence ID" value="NM_119212.4"/>
</dbReference>
<dbReference type="SMR" id="Q9SUI0"/>
<dbReference type="BioGRID" id="14476">
    <property type="interactions" value="37"/>
</dbReference>
<dbReference type="FunCoup" id="Q9SUI0">
    <property type="interactions" value="68"/>
</dbReference>
<dbReference type="IntAct" id="Q9SUI0">
    <property type="interactions" value="37"/>
</dbReference>
<dbReference type="STRING" id="3702.Q9SUI0"/>
<dbReference type="PaxDb" id="3702-AT4G30660.1"/>
<dbReference type="ProteomicsDB" id="236533"/>
<dbReference type="EnsemblPlants" id="AT4G30660.1">
    <property type="protein sequence ID" value="AT4G30660.1"/>
    <property type="gene ID" value="AT4G30660"/>
</dbReference>
<dbReference type="EnsemblPlants" id="AT4G30660.2">
    <property type="protein sequence ID" value="AT4G30660.2"/>
    <property type="gene ID" value="AT4G30660"/>
</dbReference>
<dbReference type="GeneID" id="829189"/>
<dbReference type="Gramene" id="AT4G30660.1">
    <property type="protein sequence ID" value="AT4G30660.1"/>
    <property type="gene ID" value="AT4G30660"/>
</dbReference>
<dbReference type="Gramene" id="AT4G30660.2">
    <property type="protein sequence ID" value="AT4G30660.2"/>
    <property type="gene ID" value="AT4G30660"/>
</dbReference>
<dbReference type="KEGG" id="ath:AT4G30660"/>
<dbReference type="Araport" id="AT4G30660"/>
<dbReference type="TAIR" id="AT4G30660"/>
<dbReference type="eggNOG" id="KOG1773">
    <property type="taxonomic scope" value="Eukaryota"/>
</dbReference>
<dbReference type="HOGENOM" id="CLU_107649_6_1_1"/>
<dbReference type="InParanoid" id="Q9SUI0"/>
<dbReference type="OMA" id="IYVIVFQ"/>
<dbReference type="OrthoDB" id="2802411at2759"/>
<dbReference type="PhylomeDB" id="Q9SUI0"/>
<dbReference type="PRO" id="PR:Q9SUI0"/>
<dbReference type="Proteomes" id="UP000006548">
    <property type="component" value="Chromosome 4"/>
</dbReference>
<dbReference type="ExpressionAtlas" id="Q9SUI0">
    <property type="expression patterns" value="baseline and differential"/>
</dbReference>
<dbReference type="GO" id="GO:0016020">
    <property type="term" value="C:membrane"/>
    <property type="evidence" value="ECO:0007669"/>
    <property type="project" value="UniProtKB-SubCell"/>
</dbReference>
<dbReference type="InterPro" id="IPR000612">
    <property type="entry name" value="PMP3"/>
</dbReference>
<dbReference type="PANTHER" id="PTHR21659:SF119">
    <property type="entry name" value="HYDROPHOBIC PROTEIN OSR8"/>
    <property type="match status" value="1"/>
</dbReference>
<dbReference type="PANTHER" id="PTHR21659">
    <property type="entry name" value="HYDROPHOBIC PROTEIN RCI2 LOW TEMPERATURE AND SALT RESPONSIVE PROTEIN LTI6 -RELATED"/>
    <property type="match status" value="1"/>
</dbReference>
<dbReference type="Pfam" id="PF01679">
    <property type="entry name" value="Pmp3"/>
    <property type="match status" value="1"/>
</dbReference>
<dbReference type="PROSITE" id="PS01309">
    <property type="entry name" value="UPF0057"/>
    <property type="match status" value="1"/>
</dbReference>
<proteinExistence type="inferred from homology"/>